<accession>Q6IVG4</accession>
<gene>
    <name type="primary">ACAP2</name>
    <name type="synonym">CENTB2</name>
</gene>
<name>ACAP2_RABIT</name>
<reference evidence="9" key="1">
    <citation type="journal article" date="2005" name="Virus Res.">
        <title>Vaccinia virus K1L protein mediates host-range function in RK-13 cells via ankyrin repeat and may interact with a cellular GTPase-activating protein.</title>
        <authorList>
            <person name="Bradley R.R."/>
            <person name="Terajima M."/>
        </authorList>
    </citation>
    <scope>NUCLEOTIDE SEQUENCE [MRNA]</scope>
    <source>
        <tissue evidence="8">Kidney</tissue>
    </source>
</reference>
<feature type="chain" id="PRO_0000306386" description="Arf-GAP with coiled-coil, ANK repeat and PH domain-containing protein 2">
    <location>
        <begin position="1"/>
        <end position="778"/>
    </location>
</feature>
<feature type="domain" description="BAR" evidence="4">
    <location>
        <begin position="1"/>
        <end position="226"/>
    </location>
</feature>
<feature type="domain" description="PH" evidence="5">
    <location>
        <begin position="266"/>
        <end position="361"/>
    </location>
</feature>
<feature type="domain" description="Arf-GAP" evidence="6">
    <location>
        <begin position="399"/>
        <end position="520"/>
    </location>
</feature>
<feature type="repeat" description="ANK 1" evidence="4">
    <location>
        <begin position="640"/>
        <end position="669"/>
    </location>
</feature>
<feature type="repeat" description="ANK 2" evidence="4">
    <location>
        <begin position="673"/>
        <end position="702"/>
    </location>
</feature>
<feature type="repeat" description="ANK 3" evidence="4">
    <location>
        <begin position="706"/>
        <end position="735"/>
    </location>
</feature>
<feature type="zinc finger region" description="C4-type" evidence="6">
    <location>
        <begin position="414"/>
        <end position="437"/>
    </location>
</feature>
<feature type="region of interest" description="Disordered" evidence="7">
    <location>
        <begin position="371"/>
        <end position="391"/>
    </location>
</feature>
<feature type="region of interest" description="Disordered" evidence="7">
    <location>
        <begin position="518"/>
        <end position="596"/>
    </location>
</feature>
<feature type="compositionally biased region" description="Polar residues" evidence="7">
    <location>
        <begin position="379"/>
        <end position="388"/>
    </location>
</feature>
<feature type="compositionally biased region" description="Basic and acidic residues" evidence="7">
    <location>
        <begin position="524"/>
        <end position="539"/>
    </location>
</feature>
<feature type="compositionally biased region" description="Polar residues" evidence="7">
    <location>
        <begin position="550"/>
        <end position="569"/>
    </location>
</feature>
<feature type="modified residue" description="Phosphoserine" evidence="2">
    <location>
        <position position="384"/>
    </location>
</feature>
<feature type="modified residue" description="Phosphoserine" evidence="3">
    <location>
        <position position="387"/>
    </location>
</feature>
<feature type="modified residue" description="Phosphoserine" evidence="2">
    <location>
        <position position="521"/>
    </location>
</feature>
<feature type="modified residue" description="Phosphoserine" evidence="2">
    <location>
        <position position="581"/>
    </location>
</feature>
<feature type="modified residue" description="Phosphoserine" evidence="3">
    <location>
        <position position="584"/>
    </location>
</feature>
<feature type="modified residue" description="Phosphotyrosine" evidence="2">
    <location>
        <position position="742"/>
    </location>
</feature>
<feature type="modified residue" description="Phosphoserine" evidence="2">
    <location>
        <position position="775"/>
    </location>
</feature>
<evidence type="ECO:0000250" key="1"/>
<evidence type="ECO:0000250" key="2">
    <source>
        <dbReference type="UniProtKB" id="Q15057"/>
    </source>
</evidence>
<evidence type="ECO:0000250" key="3">
    <source>
        <dbReference type="UniProtKB" id="Q6ZQK5"/>
    </source>
</evidence>
<evidence type="ECO:0000255" key="4"/>
<evidence type="ECO:0000255" key="5">
    <source>
        <dbReference type="PROSITE-ProRule" id="PRU00145"/>
    </source>
</evidence>
<evidence type="ECO:0000255" key="6">
    <source>
        <dbReference type="PROSITE-ProRule" id="PRU00288"/>
    </source>
</evidence>
<evidence type="ECO:0000256" key="7">
    <source>
        <dbReference type="SAM" id="MobiDB-lite"/>
    </source>
</evidence>
<evidence type="ECO:0000269" key="8">
    <source>
    </source>
</evidence>
<evidence type="ECO:0000312" key="9">
    <source>
        <dbReference type="EMBL" id="AAT11274.1"/>
    </source>
</evidence>
<dbReference type="EMBL" id="AY620244">
    <property type="protein sequence ID" value="AAT11274.1"/>
    <property type="molecule type" value="mRNA"/>
</dbReference>
<dbReference type="RefSeq" id="NP_001075643.1">
    <property type="nucleotide sequence ID" value="NM_001082174.1"/>
</dbReference>
<dbReference type="SMR" id="Q6IVG4"/>
<dbReference type="FunCoup" id="Q6IVG4">
    <property type="interactions" value="1605"/>
</dbReference>
<dbReference type="STRING" id="9986.ENSOCUP00000001546"/>
<dbReference type="PaxDb" id="9986-ENSOCUP00000001546"/>
<dbReference type="GeneID" id="100008949"/>
<dbReference type="KEGG" id="ocu:100008949"/>
<dbReference type="CTD" id="23527"/>
<dbReference type="eggNOG" id="KOG0521">
    <property type="taxonomic scope" value="Eukaryota"/>
</dbReference>
<dbReference type="InParanoid" id="Q6IVG4"/>
<dbReference type="OrthoDB" id="10070851at2759"/>
<dbReference type="Proteomes" id="UP000001811">
    <property type="component" value="Unplaced"/>
</dbReference>
<dbReference type="GO" id="GO:0010008">
    <property type="term" value="C:endosome membrane"/>
    <property type="evidence" value="ECO:0000250"/>
    <property type="project" value="UniProtKB"/>
</dbReference>
<dbReference type="GO" id="GO:0005886">
    <property type="term" value="C:plasma membrane"/>
    <property type="evidence" value="ECO:0000250"/>
    <property type="project" value="UniProtKB"/>
</dbReference>
<dbReference type="GO" id="GO:0005096">
    <property type="term" value="F:GTPase activator activity"/>
    <property type="evidence" value="ECO:0007669"/>
    <property type="project" value="UniProtKB-KW"/>
</dbReference>
<dbReference type="GO" id="GO:0008270">
    <property type="term" value="F:zinc ion binding"/>
    <property type="evidence" value="ECO:0007669"/>
    <property type="project" value="UniProtKB-KW"/>
</dbReference>
<dbReference type="GO" id="GO:1990090">
    <property type="term" value="P:cellular response to nerve growth factor stimulus"/>
    <property type="evidence" value="ECO:0000250"/>
    <property type="project" value="UniProtKB"/>
</dbReference>
<dbReference type="GO" id="GO:0032456">
    <property type="term" value="P:endocytic recycling"/>
    <property type="evidence" value="ECO:0000250"/>
    <property type="project" value="UniProtKB"/>
</dbReference>
<dbReference type="CDD" id="cd08851">
    <property type="entry name" value="ArfGap_ACAP2"/>
    <property type="match status" value="1"/>
</dbReference>
<dbReference type="CDD" id="cd07638">
    <property type="entry name" value="BAR_ACAP2"/>
    <property type="match status" value="1"/>
</dbReference>
<dbReference type="CDD" id="cd13250">
    <property type="entry name" value="PH_ACAP"/>
    <property type="match status" value="1"/>
</dbReference>
<dbReference type="FunFam" id="1.10.220.150:FF:000007">
    <property type="entry name" value="Arf-GAP with coiled-coil, ANK repeat and PH domain-containing protein 2"/>
    <property type="match status" value="1"/>
</dbReference>
<dbReference type="FunFam" id="1.25.40.20:FF:000020">
    <property type="entry name" value="Arf-GAP with coiled-coil, ANK repeat and PH domain-containing protein 2"/>
    <property type="match status" value="1"/>
</dbReference>
<dbReference type="FunFam" id="2.30.29.30:FF:000026">
    <property type="entry name" value="Arf-GAP with coiled-coil, ANK repeat and PH domain-containing protein 2"/>
    <property type="match status" value="1"/>
</dbReference>
<dbReference type="FunFam" id="1.20.1270.60:FF:000025">
    <property type="entry name" value="arf-GAP with coiled-coil, ANK repeat and PH domain-containing protein 2"/>
    <property type="match status" value="1"/>
</dbReference>
<dbReference type="Gene3D" id="1.25.40.20">
    <property type="entry name" value="Ankyrin repeat-containing domain"/>
    <property type="match status" value="1"/>
</dbReference>
<dbReference type="Gene3D" id="1.10.220.150">
    <property type="entry name" value="Arf GTPase activating protein"/>
    <property type="match status" value="1"/>
</dbReference>
<dbReference type="Gene3D" id="1.20.1270.60">
    <property type="entry name" value="Arfaptin homology (AH) domain/BAR domain"/>
    <property type="match status" value="1"/>
</dbReference>
<dbReference type="Gene3D" id="2.30.29.30">
    <property type="entry name" value="Pleckstrin-homology domain (PH domain)/Phosphotyrosine-binding domain (PTB)"/>
    <property type="match status" value="1"/>
</dbReference>
<dbReference type="InterPro" id="IPR045258">
    <property type="entry name" value="ACAP1/2/3-like"/>
</dbReference>
<dbReference type="InterPro" id="IPR027267">
    <property type="entry name" value="AH/BAR_dom_sf"/>
</dbReference>
<dbReference type="InterPro" id="IPR002110">
    <property type="entry name" value="Ankyrin_rpt"/>
</dbReference>
<dbReference type="InterPro" id="IPR036770">
    <property type="entry name" value="Ankyrin_rpt-contain_sf"/>
</dbReference>
<dbReference type="InterPro" id="IPR037278">
    <property type="entry name" value="ARFGAP/RecO"/>
</dbReference>
<dbReference type="InterPro" id="IPR001164">
    <property type="entry name" value="ArfGAP_dom"/>
</dbReference>
<dbReference type="InterPro" id="IPR038508">
    <property type="entry name" value="ArfGAP_dom_sf"/>
</dbReference>
<dbReference type="InterPro" id="IPR004148">
    <property type="entry name" value="BAR_dom"/>
</dbReference>
<dbReference type="InterPro" id="IPR011993">
    <property type="entry name" value="PH-like_dom_sf"/>
</dbReference>
<dbReference type="InterPro" id="IPR001849">
    <property type="entry name" value="PH_domain"/>
</dbReference>
<dbReference type="PANTHER" id="PTHR23180:SF241">
    <property type="entry name" value="ARF-GAP WITH COILED-COIL, ANK REPEAT AND PH DOMAIN-CONTAINING PROTEIN 2"/>
    <property type="match status" value="1"/>
</dbReference>
<dbReference type="PANTHER" id="PTHR23180">
    <property type="entry name" value="CENTAURIN/ARF"/>
    <property type="match status" value="1"/>
</dbReference>
<dbReference type="Pfam" id="PF12796">
    <property type="entry name" value="Ank_2"/>
    <property type="match status" value="1"/>
</dbReference>
<dbReference type="Pfam" id="PF01412">
    <property type="entry name" value="ArfGap"/>
    <property type="match status" value="1"/>
</dbReference>
<dbReference type="Pfam" id="PF16746">
    <property type="entry name" value="BAR_3"/>
    <property type="match status" value="1"/>
</dbReference>
<dbReference type="Pfam" id="PF00169">
    <property type="entry name" value="PH"/>
    <property type="match status" value="1"/>
</dbReference>
<dbReference type="PRINTS" id="PR00405">
    <property type="entry name" value="REVINTRACTNG"/>
</dbReference>
<dbReference type="SMART" id="SM00248">
    <property type="entry name" value="ANK"/>
    <property type="match status" value="3"/>
</dbReference>
<dbReference type="SMART" id="SM00105">
    <property type="entry name" value="ArfGap"/>
    <property type="match status" value="1"/>
</dbReference>
<dbReference type="SMART" id="SM00233">
    <property type="entry name" value="PH"/>
    <property type="match status" value="1"/>
</dbReference>
<dbReference type="SUPFAM" id="SSF48403">
    <property type="entry name" value="Ankyrin repeat"/>
    <property type="match status" value="1"/>
</dbReference>
<dbReference type="SUPFAM" id="SSF57863">
    <property type="entry name" value="ArfGap/RecO-like zinc finger"/>
    <property type="match status" value="1"/>
</dbReference>
<dbReference type="SUPFAM" id="SSF103657">
    <property type="entry name" value="BAR/IMD domain-like"/>
    <property type="match status" value="1"/>
</dbReference>
<dbReference type="SUPFAM" id="SSF50729">
    <property type="entry name" value="PH domain-like"/>
    <property type="match status" value="1"/>
</dbReference>
<dbReference type="PROSITE" id="PS50297">
    <property type="entry name" value="ANK_REP_REGION"/>
    <property type="match status" value="1"/>
</dbReference>
<dbReference type="PROSITE" id="PS50088">
    <property type="entry name" value="ANK_REPEAT"/>
    <property type="match status" value="2"/>
</dbReference>
<dbReference type="PROSITE" id="PS50115">
    <property type="entry name" value="ARFGAP"/>
    <property type="match status" value="1"/>
</dbReference>
<dbReference type="PROSITE" id="PS50003">
    <property type="entry name" value="PH_DOMAIN"/>
    <property type="match status" value="1"/>
</dbReference>
<keyword id="KW-0040">ANK repeat</keyword>
<keyword id="KW-1003">Cell membrane</keyword>
<keyword id="KW-0175">Coiled coil</keyword>
<keyword id="KW-0967">Endosome</keyword>
<keyword id="KW-0343">GTPase activation</keyword>
<keyword id="KW-0472">Membrane</keyword>
<keyword id="KW-0479">Metal-binding</keyword>
<keyword id="KW-0597">Phosphoprotein</keyword>
<keyword id="KW-1185">Reference proteome</keyword>
<keyword id="KW-0677">Repeat</keyword>
<keyword id="KW-0862">Zinc</keyword>
<keyword id="KW-0863">Zinc-finger</keyword>
<protein>
    <recommendedName>
        <fullName>Arf-GAP with coiled-coil, ANK repeat and PH domain-containing protein 2</fullName>
    </recommendedName>
    <alternativeName>
        <fullName>Centaurin-beta-2</fullName>
        <shortName>Cnt-b2</shortName>
    </alternativeName>
</protein>
<proteinExistence type="evidence at transcript level"/>
<organism>
    <name type="scientific">Oryctolagus cuniculus</name>
    <name type="common">Rabbit</name>
    <dbReference type="NCBI Taxonomy" id="9986"/>
    <lineage>
        <taxon>Eukaryota</taxon>
        <taxon>Metazoa</taxon>
        <taxon>Chordata</taxon>
        <taxon>Craniata</taxon>
        <taxon>Vertebrata</taxon>
        <taxon>Euteleostomi</taxon>
        <taxon>Mammalia</taxon>
        <taxon>Eutheria</taxon>
        <taxon>Euarchontoglires</taxon>
        <taxon>Glires</taxon>
        <taxon>Lagomorpha</taxon>
        <taxon>Leporidae</taxon>
        <taxon>Oryctolagus</taxon>
    </lineage>
</organism>
<sequence>MKMTVDFEECLKDSPRFRAALEEVEGDVAELELKLDKLVKLCIAMIDTGKAFCLANKQFMNGIRDLAQYSSNDAVVETSLTKFSDSLQEMINFHTILFDQTQRSIKAQLQNFVKEDLRKFKDAKKQFEKVSEEKENALAKNAQVQRNKQHEVEEATNILTATRKCFRHIALDYVLQINVLQSKRRSEILKSMLSFMYAHLAFFHQGYDLFSELGPYMKDLGAQLDRLVVDAAKEKREMEQKHSTIQQKDFSSDDSKLEYNVDAANGIVMEGYLFKRASNAFKTWNRRWFSIQNNQLVYQKKFKDNPTVVVEDLRLCTVKHCEDIERRFCFEVVSPTKSCMLQADSEKLRQAWIKAVQTSIATAYREKGDESEKLDKKSSPSTGSLDSGNESKEKLLKGESALQRVQCVPGNASCCDCGLADPRWASINLGITLCIECSGIHRSLGVHFSKVRSLTLDTWEPELLKLMCELGNDVINRVYEANVEKMGIKKPQPGQRQEKEAYIKAKYVERKFVDKYSVSSSPPEQEKKVVSKDSEEKRLSIPKLGPGDQVRTSIQSSVKSNDSGIQQSSDDGRESLPSTVSANSLYEPEGERQDSSVFLDSKHLNPGLQLYRASYEKNLPKMAEALAHGADVNWANSEENKATPLIQAVLGGSLVTCEFLLQNGANVNQRDVQGRGPLHHATVLGHTGQVCLFLKRGANQHATDEEGKDPLSIAVEAANADIVTLLRLARMNEEMRESEGLYGQPGDETYQDIFRDFSQMASNNPEKLNRFQQDSQKF</sequence>
<comment type="function">
    <text evidence="2">GTPase-activating protein (GAP) for ADP ribosylation factor 6 (ARF6). Doesn't show GAP activity for RAB35.</text>
</comment>
<comment type="activity regulation">
    <text evidence="2">GAP activity stimulated by phosphatidylinositol 4,5-bisphosphate (PIP2) and phosphatidic acid.</text>
</comment>
<comment type="subunit">
    <text evidence="1">Interacts with RAB35 (GTP-bound form); the interaction is direct and probably recruits ACAP2 to membranes. Interacts with MICALL1; the interaction is indirect through RAB35 (By similarity).</text>
</comment>
<comment type="subcellular location">
    <subcellularLocation>
        <location evidence="1">Endosome membrane</location>
        <topology evidence="1">Peripheral membrane protein</topology>
    </subcellularLocation>
    <subcellularLocation>
        <location evidence="2">Cell membrane</location>
    </subcellularLocation>
</comment>
<comment type="domain">
    <text evidence="2">The ANK domains are required for interaction with RAB35.</text>
</comment>